<organism>
    <name type="scientific">Escherichia coli (strain K12)</name>
    <dbReference type="NCBI Taxonomy" id="83333"/>
    <lineage>
        <taxon>Bacteria</taxon>
        <taxon>Pseudomonadati</taxon>
        <taxon>Pseudomonadota</taxon>
        <taxon>Gammaproteobacteria</taxon>
        <taxon>Enterobacterales</taxon>
        <taxon>Enterobacteriaceae</taxon>
        <taxon>Escherichia</taxon>
    </lineage>
</organism>
<sequence>MKLLAKAPLNLLRAFEAAGRTGAFALAASELELSPSAISHAIRKLENLLDVRLFQRSTREITLTKEGEILLEHIQRGFNELQQGLALVTADESRPLRLHTAPSFAHQWLLPRLGKFIRENPSIDLRLSASTEYARFEQDDFDLDIVYGEPRPSPYEKIPLAVEELTPLCSPQLAERLKKPEDLYALTLIQCDVQLYQWKGWFEANKMTPPNNYGLRFDRSFMAIAAAVDGLGVVLESKLLAEREIASGKLVCPLVNSTSEIHYIGHYLVFPQHQHMHSALDVFKTWLLNELNLGKIR</sequence>
<evidence type="ECO:0000255" key="1">
    <source>
        <dbReference type="PROSITE-ProRule" id="PRU00253"/>
    </source>
</evidence>
<evidence type="ECO:0000305" key="2"/>
<accession>Q57083</accession>
<reference key="1">
    <citation type="submission" date="1996-06" db="EMBL/GenBank/DDBJ databases">
        <authorList>
            <person name="Loewen P.C."/>
            <person name="Switala J."/>
            <person name="Volkert M.R."/>
        </authorList>
    </citation>
    <scope>NUCLEOTIDE SEQUENCE [GENOMIC DNA]</scope>
    <source>
        <strain>K12</strain>
    </source>
</reference>
<reference key="2">
    <citation type="submission" date="1996-02" db="EMBL/GenBank/DDBJ databases">
        <title>Systematic sequencing of the Escherichia coli genome: analysis of the 4.0 - 6.0 min (189,987 - 281,416bp) region.</title>
        <authorList>
            <person name="Takemoto K."/>
            <person name="Mori H."/>
            <person name="Murayama N."/>
            <person name="Kataoka K."/>
            <person name="Yano M."/>
            <person name="Itoh T."/>
            <person name="Yamamoto Y."/>
            <person name="Inokuchi H."/>
            <person name="Miki T."/>
            <person name="Hatada E."/>
            <person name="Fukuda R."/>
            <person name="Ichihara S."/>
            <person name="Mizuno T."/>
            <person name="Makino K."/>
            <person name="Nakata A."/>
            <person name="Yura T."/>
            <person name="Sampei G."/>
            <person name="Mizobuchi K."/>
        </authorList>
    </citation>
    <scope>NUCLEOTIDE SEQUENCE [LARGE SCALE GENOMIC DNA]</scope>
    <source>
        <strain>K12 / W3110 / ATCC 27325 / DSM 5911</strain>
    </source>
</reference>
<reference key="3">
    <citation type="submission" date="1997-01" db="EMBL/GenBank/DDBJ databases">
        <title>Sequence of minutes 4-25 of Escherichia coli.</title>
        <authorList>
            <person name="Chung E."/>
            <person name="Allen E."/>
            <person name="Araujo R."/>
            <person name="Aparicio A.M."/>
            <person name="Davis K."/>
            <person name="Duncan M."/>
            <person name="Federspiel N."/>
            <person name="Hyman R."/>
            <person name="Kalman S."/>
            <person name="Komp C."/>
            <person name="Kurdi O."/>
            <person name="Lew H."/>
            <person name="Lin D."/>
            <person name="Namath A."/>
            <person name="Oefner P."/>
            <person name="Roberts D."/>
            <person name="Schramm S."/>
            <person name="Davis R.W."/>
        </authorList>
    </citation>
    <scope>NUCLEOTIDE SEQUENCE [LARGE SCALE GENOMIC DNA]</scope>
    <source>
        <strain>K12 / MG1655 / ATCC 47076</strain>
    </source>
</reference>
<reference key="4">
    <citation type="journal article" date="1997" name="Science">
        <title>The complete genome sequence of Escherichia coli K-12.</title>
        <authorList>
            <person name="Blattner F.R."/>
            <person name="Plunkett G. III"/>
            <person name="Bloch C.A."/>
            <person name="Perna N.T."/>
            <person name="Burland V."/>
            <person name="Riley M."/>
            <person name="Collado-Vides J."/>
            <person name="Glasner J.D."/>
            <person name="Rode C.K."/>
            <person name="Mayhew G.F."/>
            <person name="Gregor J."/>
            <person name="Davis N.W."/>
            <person name="Kirkpatrick H.A."/>
            <person name="Goeden M.A."/>
            <person name="Rose D.J."/>
            <person name="Mau B."/>
            <person name="Shao Y."/>
        </authorList>
    </citation>
    <scope>NUCLEOTIDE SEQUENCE [LARGE SCALE GENOMIC DNA]</scope>
    <source>
        <strain>K12 / MG1655 / ATCC 47076</strain>
    </source>
</reference>
<reference key="5">
    <citation type="journal article" date="2006" name="Mol. Syst. Biol.">
        <title>Highly accurate genome sequences of Escherichia coli K-12 strains MG1655 and W3110.</title>
        <authorList>
            <person name="Hayashi K."/>
            <person name="Morooka N."/>
            <person name="Yamamoto Y."/>
            <person name="Fujita K."/>
            <person name="Isono K."/>
            <person name="Choi S."/>
            <person name="Ohtsubo E."/>
            <person name="Baba T."/>
            <person name="Wanner B.L."/>
            <person name="Mori H."/>
            <person name="Horiuchi T."/>
        </authorList>
    </citation>
    <scope>NUCLEOTIDE SEQUENCE [LARGE SCALE GENOMIC DNA]</scope>
    <source>
        <strain>K12 / W3110 / ATCC 27325 / DSM 5911</strain>
    </source>
</reference>
<name>PERR_ECOLI</name>
<feature type="chain" id="PRO_0000105743" description="HTH-type transcriptional regulator PerR">
    <location>
        <begin position="1"/>
        <end position="297"/>
    </location>
</feature>
<feature type="domain" description="HTH lysR-type" evidence="1">
    <location>
        <begin position="7"/>
        <end position="64"/>
    </location>
</feature>
<feature type="DNA-binding region" description="H-T-H motif" evidence="1">
    <location>
        <begin position="24"/>
        <end position="44"/>
    </location>
</feature>
<keyword id="KW-0238">DNA-binding</keyword>
<keyword id="KW-1185">Reference proteome</keyword>
<keyword id="KW-0804">Transcription</keyword>
<keyword id="KW-0805">Transcription regulation</keyword>
<gene>
    <name type="primary">perR</name>
    <name type="ordered locus">b0254</name>
    <name type="ordered locus">JW0244</name>
</gene>
<protein>
    <recommendedName>
        <fullName>HTH-type transcriptional regulator PerR</fullName>
    </recommendedName>
    <alternativeName>
        <fullName>Peroxide resistance protein PerR</fullName>
    </alternativeName>
</protein>
<comment type="function">
    <text>Apparent regulatory gene involved in peroxide resistance in stationary phase.</text>
</comment>
<comment type="interaction">
    <interactant intactId="EBI-541993">
        <id>Q57083</id>
    </interactant>
    <interactant intactId="EBI-541993">
        <id>Q57083</id>
        <label>perR</label>
    </interactant>
    <organismsDiffer>false</organismsDiffer>
    <experiments>3</experiments>
</comment>
<comment type="similarity">
    <text evidence="2">Belongs to the LysR transcriptional regulatory family.</text>
</comment>
<dbReference type="EMBL" id="U57080">
    <property type="protein sequence ID" value="AAB01994.1"/>
    <property type="molecule type" value="Genomic_DNA"/>
</dbReference>
<dbReference type="EMBL" id="U70214">
    <property type="protein sequence ID" value="AAB08673.1"/>
    <property type="molecule type" value="Genomic_DNA"/>
</dbReference>
<dbReference type="EMBL" id="U00096">
    <property type="protein sequence ID" value="AAC73357.1"/>
    <property type="molecule type" value="Genomic_DNA"/>
</dbReference>
<dbReference type="EMBL" id="AP009048">
    <property type="protein sequence ID" value="BAA77924.1"/>
    <property type="molecule type" value="Genomic_DNA"/>
</dbReference>
<dbReference type="PIR" id="F64750">
    <property type="entry name" value="F64750"/>
</dbReference>
<dbReference type="RefSeq" id="NP_414788.1">
    <property type="nucleotide sequence ID" value="NC_000913.3"/>
</dbReference>
<dbReference type="RefSeq" id="WP_000770246.1">
    <property type="nucleotide sequence ID" value="NZ_LN832404.1"/>
</dbReference>
<dbReference type="SMR" id="Q57083"/>
<dbReference type="BioGRID" id="4259774">
    <property type="interactions" value="82"/>
</dbReference>
<dbReference type="BioGRID" id="849791">
    <property type="interactions" value="2"/>
</dbReference>
<dbReference type="DIP" id="DIP-10463N"/>
<dbReference type="FunCoup" id="Q57083">
    <property type="interactions" value="44"/>
</dbReference>
<dbReference type="IntAct" id="Q57083">
    <property type="interactions" value="6"/>
</dbReference>
<dbReference type="STRING" id="511145.b0254"/>
<dbReference type="PaxDb" id="511145-b0254"/>
<dbReference type="DNASU" id="945417"/>
<dbReference type="EnsemblBacteria" id="AAC73357">
    <property type="protein sequence ID" value="AAC73357"/>
    <property type="gene ID" value="b0254"/>
</dbReference>
<dbReference type="GeneID" id="945417"/>
<dbReference type="KEGG" id="ecj:JW0244"/>
<dbReference type="KEGG" id="eco:b0254"/>
<dbReference type="KEGG" id="ecoc:C3026_01215"/>
<dbReference type="KEGG" id="ecoc:C3026_23950"/>
<dbReference type="PATRIC" id="fig|1411691.4.peg.2028"/>
<dbReference type="EchoBASE" id="EB3124"/>
<dbReference type="eggNOG" id="COG0583">
    <property type="taxonomic scope" value="Bacteria"/>
</dbReference>
<dbReference type="HOGENOM" id="CLU_039613_37_1_6"/>
<dbReference type="InParanoid" id="Q57083"/>
<dbReference type="OMA" id="QDYYCEK"/>
<dbReference type="OrthoDB" id="5526340at2"/>
<dbReference type="PhylomeDB" id="Q57083"/>
<dbReference type="BioCyc" id="EcoCyc:G6129-MONOMER"/>
<dbReference type="PRO" id="PR:Q57083"/>
<dbReference type="Proteomes" id="UP000000625">
    <property type="component" value="Chromosome"/>
</dbReference>
<dbReference type="GO" id="GO:0003700">
    <property type="term" value="F:DNA-binding transcription factor activity"/>
    <property type="evidence" value="ECO:0000318"/>
    <property type="project" value="GO_Central"/>
</dbReference>
<dbReference type="GO" id="GO:0042802">
    <property type="term" value="F:identical protein binding"/>
    <property type="evidence" value="ECO:0000353"/>
    <property type="project" value="IntAct"/>
</dbReference>
<dbReference type="GO" id="GO:0043565">
    <property type="term" value="F:sequence-specific DNA binding"/>
    <property type="evidence" value="ECO:0000318"/>
    <property type="project" value="GO_Central"/>
</dbReference>
<dbReference type="GO" id="GO:0006351">
    <property type="term" value="P:DNA-templated transcription"/>
    <property type="evidence" value="ECO:0000318"/>
    <property type="project" value="GO_Central"/>
</dbReference>
<dbReference type="CDD" id="cd08432">
    <property type="entry name" value="PBP2_GcdR_TrpI_HvrB_AmpR_like"/>
    <property type="match status" value="1"/>
</dbReference>
<dbReference type="FunFam" id="3.40.190.10:FF:000017">
    <property type="entry name" value="Glycine cleavage system transcriptional activator"/>
    <property type="match status" value="1"/>
</dbReference>
<dbReference type="FunFam" id="1.10.10.10:FF:000001">
    <property type="entry name" value="LysR family transcriptional regulator"/>
    <property type="match status" value="1"/>
</dbReference>
<dbReference type="Gene3D" id="3.40.190.10">
    <property type="entry name" value="Periplasmic binding protein-like II"/>
    <property type="match status" value="2"/>
</dbReference>
<dbReference type="Gene3D" id="1.10.10.10">
    <property type="entry name" value="Winged helix-like DNA-binding domain superfamily/Winged helix DNA-binding domain"/>
    <property type="match status" value="1"/>
</dbReference>
<dbReference type="InterPro" id="IPR005119">
    <property type="entry name" value="LysR_subst-bd"/>
</dbReference>
<dbReference type="InterPro" id="IPR000847">
    <property type="entry name" value="Tscrpt_reg_HTH_LysR"/>
</dbReference>
<dbReference type="InterPro" id="IPR036388">
    <property type="entry name" value="WH-like_DNA-bd_sf"/>
</dbReference>
<dbReference type="InterPro" id="IPR036390">
    <property type="entry name" value="WH_DNA-bd_sf"/>
</dbReference>
<dbReference type="PANTHER" id="PTHR30537">
    <property type="entry name" value="HTH-TYPE TRANSCRIPTIONAL REGULATOR"/>
    <property type="match status" value="1"/>
</dbReference>
<dbReference type="PANTHER" id="PTHR30537:SF58">
    <property type="entry name" value="HTH-TYPE TRANSCRIPTIONAL REGULATOR PERR"/>
    <property type="match status" value="1"/>
</dbReference>
<dbReference type="Pfam" id="PF00126">
    <property type="entry name" value="HTH_1"/>
    <property type="match status" value="1"/>
</dbReference>
<dbReference type="Pfam" id="PF03466">
    <property type="entry name" value="LysR_substrate"/>
    <property type="match status" value="1"/>
</dbReference>
<dbReference type="PRINTS" id="PR00039">
    <property type="entry name" value="HTHLYSR"/>
</dbReference>
<dbReference type="SUPFAM" id="SSF53850">
    <property type="entry name" value="Periplasmic binding protein-like II"/>
    <property type="match status" value="1"/>
</dbReference>
<dbReference type="SUPFAM" id="SSF46785">
    <property type="entry name" value="Winged helix' DNA-binding domain"/>
    <property type="match status" value="1"/>
</dbReference>
<dbReference type="PROSITE" id="PS50931">
    <property type="entry name" value="HTH_LYSR"/>
    <property type="match status" value="1"/>
</dbReference>
<proteinExistence type="evidence at protein level"/>